<reference key="1">
    <citation type="journal article" date="1988" name="Biochemistry">
        <title>Primary structure of non-histone protein HMG1 revealed by the nucleotide sequence.</title>
        <authorList>
            <person name="Tsuda K."/>
            <person name="Kikuchi M."/>
            <person name="Mori K."/>
            <person name="Waga S."/>
            <person name="Yoshida M."/>
        </authorList>
    </citation>
    <scope>NUCLEOTIDE SEQUENCE [MRNA]</scope>
</reference>
<reference key="2">
    <citation type="journal article" date="2004" name="J. Biol. Chem.">
        <title>Involvement of toll-like receptors 2 and 4 in cellular activation by high mobility group box 1 protein.</title>
        <authorList>
            <person name="Park J.S."/>
            <person name="Svetkauskaite D."/>
            <person name="He Q."/>
            <person name="Kim J.Y."/>
            <person name="Strassheim D."/>
            <person name="Ishizaka A."/>
            <person name="Abraham E."/>
        </authorList>
    </citation>
    <scope>FUNCTION</scope>
</reference>
<reference key="3">
    <citation type="journal article" date="2020" name="J. Virol.">
        <title>PCV2 Induces Reactive Oxygen Species To Promote Nucleocytoplasmic Translocation of the Viral DNA Binding Protein HMGB1 To Enhance Its Replication.</title>
        <authorList>
            <person name="Sun R."/>
            <person name="Sun S."/>
            <person name="Zhang Y."/>
            <person name="Zhou Y."/>
            <person name="Shan Y."/>
            <person name="Li X."/>
            <person name="Fang W."/>
        </authorList>
    </citation>
    <scope>FUNCTION</scope>
    <scope>SUBCELLULAR LOCATION</scope>
</reference>
<reference key="4">
    <citation type="journal article" date="2022" name="Viruses">
        <title>PRRSV Induces HMGB1 Phosphorylation at Threonine-51 Residue to Enhance Its Secretion.</title>
        <authorList>
            <person name="Wang R."/>
            <person name="Zhang J."/>
            <person name="Fu Y."/>
            <person name="Jia L."/>
            <person name="Zhang Y."/>
            <person name="Bai L."/>
            <person name="Wang W."/>
            <person name="Cheng D."/>
            <person name="Liu E."/>
        </authorList>
    </citation>
    <scope>PHOSPHORYLATION AT THR-51</scope>
    <scope>SUBCELLULAR LOCATION</scope>
    <scope>MUTAGENESIS OF THR-51</scope>
</reference>
<protein>
    <recommendedName>
        <fullName>High mobility group protein B1</fullName>
    </recommendedName>
    <alternativeName>
        <fullName>High mobility group protein 1</fullName>
        <shortName>HMG-1</shortName>
    </alternativeName>
</protein>
<dbReference type="EMBL" id="M21683">
    <property type="protein sequence ID" value="AAA31050.1"/>
    <property type="molecule type" value="mRNA"/>
</dbReference>
<dbReference type="PIR" id="A28897">
    <property type="entry name" value="A28897"/>
</dbReference>
<dbReference type="RefSeq" id="NP_001004034.1">
    <property type="nucleotide sequence ID" value="NM_001004034.1"/>
</dbReference>
<dbReference type="SMR" id="P12682"/>
<dbReference type="FunCoup" id="P12682">
    <property type="interactions" value="1209"/>
</dbReference>
<dbReference type="IntAct" id="P12682">
    <property type="interactions" value="2"/>
</dbReference>
<dbReference type="STRING" id="9823.ENSSSCP00000054523"/>
<dbReference type="iPTMnet" id="P12682"/>
<dbReference type="PaxDb" id="9823-ENSSSCP00000009955"/>
<dbReference type="PeptideAtlas" id="P12682"/>
<dbReference type="GeneID" id="445521"/>
<dbReference type="KEGG" id="ssc:445521"/>
<dbReference type="CTD" id="3146"/>
<dbReference type="eggNOG" id="KOG0381">
    <property type="taxonomic scope" value="Eukaryota"/>
</dbReference>
<dbReference type="InParanoid" id="P12682"/>
<dbReference type="OrthoDB" id="1919336at2759"/>
<dbReference type="Proteomes" id="UP000008227">
    <property type="component" value="Unplaced"/>
</dbReference>
<dbReference type="Proteomes" id="UP000314985">
    <property type="component" value="Unplaced"/>
</dbReference>
<dbReference type="Proteomes" id="UP000694570">
    <property type="component" value="Unplaced"/>
</dbReference>
<dbReference type="Proteomes" id="UP000694571">
    <property type="component" value="Unplaced"/>
</dbReference>
<dbReference type="Proteomes" id="UP000694720">
    <property type="component" value="Unplaced"/>
</dbReference>
<dbReference type="Proteomes" id="UP000694722">
    <property type="component" value="Unplaced"/>
</dbReference>
<dbReference type="Proteomes" id="UP000694723">
    <property type="component" value="Unplaced"/>
</dbReference>
<dbReference type="Proteomes" id="UP000694724">
    <property type="component" value="Unplaced"/>
</dbReference>
<dbReference type="Proteomes" id="UP000694725">
    <property type="component" value="Unplaced"/>
</dbReference>
<dbReference type="Proteomes" id="UP000694726">
    <property type="component" value="Unplaced"/>
</dbReference>
<dbReference type="Proteomes" id="UP000694727">
    <property type="component" value="Unplaced"/>
</dbReference>
<dbReference type="Proteomes" id="UP000694728">
    <property type="component" value="Unplaced"/>
</dbReference>
<dbReference type="GO" id="GO:0000785">
    <property type="term" value="C:chromatin"/>
    <property type="evidence" value="ECO:0000314"/>
    <property type="project" value="AgBase"/>
</dbReference>
<dbReference type="GO" id="GO:0000793">
    <property type="term" value="C:condensed chromosome"/>
    <property type="evidence" value="ECO:0000250"/>
    <property type="project" value="UniProtKB"/>
</dbReference>
<dbReference type="GO" id="GO:0005793">
    <property type="term" value="C:endoplasmic reticulum-Golgi intermediate compartment"/>
    <property type="evidence" value="ECO:0007669"/>
    <property type="project" value="UniProtKB-SubCell"/>
</dbReference>
<dbReference type="GO" id="GO:0005768">
    <property type="term" value="C:endosome"/>
    <property type="evidence" value="ECO:0007669"/>
    <property type="project" value="UniProtKB-SubCell"/>
</dbReference>
<dbReference type="GO" id="GO:0005576">
    <property type="term" value="C:extracellular region"/>
    <property type="evidence" value="ECO:0007669"/>
    <property type="project" value="UniProtKB-SubCell"/>
</dbReference>
<dbReference type="GO" id="GO:0005634">
    <property type="term" value="C:nucleus"/>
    <property type="evidence" value="ECO:0007669"/>
    <property type="project" value="UniProtKB-SubCell"/>
</dbReference>
<dbReference type="GO" id="GO:0005886">
    <property type="term" value="C:plasma membrane"/>
    <property type="evidence" value="ECO:0007669"/>
    <property type="project" value="UniProtKB-SubCell"/>
</dbReference>
<dbReference type="GO" id="GO:0000405">
    <property type="term" value="F:bubble DNA binding"/>
    <property type="evidence" value="ECO:0000250"/>
    <property type="project" value="AgBase"/>
</dbReference>
<dbReference type="GO" id="GO:0008301">
    <property type="term" value="F:DNA binding, bending"/>
    <property type="evidence" value="ECO:0000318"/>
    <property type="project" value="GO_Central"/>
</dbReference>
<dbReference type="GO" id="GO:0000400">
    <property type="term" value="F:four-way junction DNA binding"/>
    <property type="evidence" value="ECO:0000250"/>
    <property type="project" value="AgBase"/>
</dbReference>
<dbReference type="GO" id="GO:0044378">
    <property type="term" value="F:non-sequence-specific DNA binding, bending"/>
    <property type="evidence" value="ECO:0000314"/>
    <property type="project" value="AgBase"/>
</dbReference>
<dbReference type="GO" id="GO:0097100">
    <property type="term" value="F:supercoiled DNA binding"/>
    <property type="evidence" value="ECO:0000250"/>
    <property type="project" value="AgBase"/>
</dbReference>
<dbReference type="GO" id="GO:0002250">
    <property type="term" value="P:adaptive immune response"/>
    <property type="evidence" value="ECO:0007669"/>
    <property type="project" value="UniProtKB-KW"/>
</dbReference>
<dbReference type="GO" id="GO:0043277">
    <property type="term" value="P:apoptotic cell clearance"/>
    <property type="evidence" value="ECO:0000250"/>
    <property type="project" value="UniProtKB"/>
</dbReference>
<dbReference type="GO" id="GO:0006914">
    <property type="term" value="P:autophagy"/>
    <property type="evidence" value="ECO:0007669"/>
    <property type="project" value="UniProtKB-KW"/>
</dbReference>
<dbReference type="GO" id="GO:0006935">
    <property type="term" value="P:chemotaxis"/>
    <property type="evidence" value="ECO:0007669"/>
    <property type="project" value="UniProtKB-KW"/>
</dbReference>
<dbReference type="GO" id="GO:0032392">
    <property type="term" value="P:DNA geometric change"/>
    <property type="evidence" value="ECO:0000250"/>
    <property type="project" value="AgBase"/>
</dbReference>
<dbReference type="GO" id="GO:0006310">
    <property type="term" value="P:DNA recombination"/>
    <property type="evidence" value="ECO:0007669"/>
    <property type="project" value="UniProtKB-KW"/>
</dbReference>
<dbReference type="GO" id="GO:0006302">
    <property type="term" value="P:double-strand break repair"/>
    <property type="evidence" value="ECO:0000250"/>
    <property type="project" value="UniProtKB"/>
</dbReference>
<dbReference type="GO" id="GO:0006303">
    <property type="term" value="P:double-strand break repair via nonhomologous end joining"/>
    <property type="evidence" value="ECO:0000314"/>
    <property type="project" value="GO_Central"/>
</dbReference>
<dbReference type="GO" id="GO:0006954">
    <property type="term" value="P:inflammatory response"/>
    <property type="evidence" value="ECO:0007669"/>
    <property type="project" value="UniProtKB-KW"/>
</dbReference>
<dbReference type="GO" id="GO:0045087">
    <property type="term" value="P:innate immune response"/>
    <property type="evidence" value="ECO:0007669"/>
    <property type="project" value="UniProtKB-KW"/>
</dbReference>
<dbReference type="GO" id="GO:0002755">
    <property type="term" value="P:MyD88-dependent toll-like receptor signaling pathway"/>
    <property type="evidence" value="ECO:0000314"/>
    <property type="project" value="UniProtKB"/>
</dbReference>
<dbReference type="GO" id="GO:0017055">
    <property type="term" value="P:negative regulation of RNA polymerase II transcription preinitiation complex assembly"/>
    <property type="evidence" value="ECO:0000250"/>
    <property type="project" value="UniProtKB"/>
</dbReference>
<dbReference type="GO" id="GO:0097350">
    <property type="term" value="P:neutrophil clearance"/>
    <property type="evidence" value="ECO:0000250"/>
    <property type="project" value="UniProtKB"/>
</dbReference>
<dbReference type="GO" id="GO:0006334">
    <property type="term" value="P:nucleosome assembly"/>
    <property type="evidence" value="ECO:0000314"/>
    <property type="project" value="AgBase"/>
</dbReference>
<dbReference type="GO" id="GO:1901224">
    <property type="term" value="P:positive regulation of non-canonical NF-kappaB signal transduction"/>
    <property type="evidence" value="ECO:0000314"/>
    <property type="project" value="UniProtKB"/>
</dbReference>
<dbReference type="GO" id="GO:0034165">
    <property type="term" value="P:positive regulation of toll-like receptor 9 signaling pathway"/>
    <property type="evidence" value="ECO:0000250"/>
    <property type="project" value="UniProtKB"/>
</dbReference>
<dbReference type="GO" id="GO:0002840">
    <property type="term" value="P:regulation of T cell mediated immune response to tumor cell"/>
    <property type="evidence" value="ECO:0000250"/>
    <property type="project" value="UniProtKB"/>
</dbReference>
<dbReference type="GO" id="GO:0006357">
    <property type="term" value="P:regulation of transcription by RNA polymerase II"/>
    <property type="evidence" value="ECO:0000318"/>
    <property type="project" value="GO_Central"/>
</dbReference>
<dbReference type="GO" id="GO:0034134">
    <property type="term" value="P:toll-like receptor 2 signaling pathway"/>
    <property type="evidence" value="ECO:0000314"/>
    <property type="project" value="UniProtKB"/>
</dbReference>
<dbReference type="GO" id="GO:0034142">
    <property type="term" value="P:toll-like receptor 4 signaling pathway"/>
    <property type="evidence" value="ECO:0000314"/>
    <property type="project" value="UniProtKB"/>
</dbReference>
<dbReference type="CDD" id="cd21978">
    <property type="entry name" value="HMG-box_HMGB_rpt1"/>
    <property type="match status" value="1"/>
</dbReference>
<dbReference type="CDD" id="cd21979">
    <property type="entry name" value="HMG-box_HMGB_rpt2"/>
    <property type="match status" value="1"/>
</dbReference>
<dbReference type="FunFam" id="1.10.30.10:FF:000006">
    <property type="entry name" value="High mobility group protein B1"/>
    <property type="match status" value="1"/>
</dbReference>
<dbReference type="FunFam" id="1.10.30.10:FF:000015">
    <property type="entry name" value="high mobility group protein B1"/>
    <property type="match status" value="1"/>
</dbReference>
<dbReference type="Gene3D" id="1.10.30.10">
    <property type="entry name" value="High mobility group box domain"/>
    <property type="match status" value="2"/>
</dbReference>
<dbReference type="InterPro" id="IPR009071">
    <property type="entry name" value="HMG_box_dom"/>
</dbReference>
<dbReference type="InterPro" id="IPR036910">
    <property type="entry name" value="HMG_box_dom_sf"/>
</dbReference>
<dbReference type="InterPro" id="IPR017967">
    <property type="entry name" value="HMG_boxA_CS"/>
</dbReference>
<dbReference type="InterPro" id="IPR050342">
    <property type="entry name" value="HMGB"/>
</dbReference>
<dbReference type="PANTHER" id="PTHR48112:SF12">
    <property type="entry name" value="HIGH MOBILITY GROUP PROTEIN B1-LIKE 1-RELATED"/>
    <property type="match status" value="1"/>
</dbReference>
<dbReference type="PANTHER" id="PTHR48112">
    <property type="entry name" value="HIGH MOBILITY GROUP PROTEIN DSP1"/>
    <property type="match status" value="1"/>
</dbReference>
<dbReference type="Pfam" id="PF00505">
    <property type="entry name" value="HMG_box"/>
    <property type="match status" value="1"/>
</dbReference>
<dbReference type="Pfam" id="PF09011">
    <property type="entry name" value="HMG_box_2"/>
    <property type="match status" value="1"/>
</dbReference>
<dbReference type="PRINTS" id="PR00886">
    <property type="entry name" value="HIGHMOBLTY12"/>
</dbReference>
<dbReference type="SMART" id="SM00398">
    <property type="entry name" value="HMG"/>
    <property type="match status" value="2"/>
</dbReference>
<dbReference type="SUPFAM" id="SSF47095">
    <property type="entry name" value="HMG-box"/>
    <property type="match status" value="2"/>
</dbReference>
<dbReference type="PROSITE" id="PS00353">
    <property type="entry name" value="HMG_BOX_1"/>
    <property type="match status" value="1"/>
</dbReference>
<dbReference type="PROSITE" id="PS50118">
    <property type="entry name" value="HMG_BOX_2"/>
    <property type="match status" value="2"/>
</dbReference>
<sequence length="215" mass="24917">MGKGDPKKPRGKMSSYAFFVQTCREEHKKKHPDASVNFSEFSKKCSERWKTMSAKEKGKFEDMAKADKARYEREMKTYIPPKGETKKKFKDPNAPKRPPSAFFLFCSEYRPKIKGEHPGLSIGDVAKKLGEMWNNTAADDKHPYEKKAAKLKEKYEKDIAAYRAKGKPDAAKKGVVKAEKSKKKKEEEEDEEDEEDEEEEEDEEDEEEEEDDDDE</sequence>
<proteinExistence type="evidence at protein level"/>
<name>HMGB1_PIG</name>
<comment type="function">
    <text evidence="1 2 4 10">Multifunctional redox sensitive protein with various roles in different cellular compartments. In the nucleus is one of the major chromatin-associated non-histone proteins and acts as a DNA chaperone involved in replication, transcription, chromatin remodeling, V(D)J recombination, DNA repair and genome stability. Proposed to be an universal biosensor for nucleic acids. Promotes host inflammatory response to sterile and infectious signals and is involved in the coordination and integration of innate and adaptive immune responses. In the cytoplasm functions as a sensor and/or chaperone for immunogenic nucleic acids implicating the activation of TLR9-mediated immune responses, and mediates autophagy. Acts as a danger-associated molecular pattern (DAMP) molecule that amplifies immune responses during tissue injury. Released to the extracellular environment can bind DNA, nucleosomes, IL-1 beta, CXCL12, AGER isoform 2/sRAGE, lipopolysaccharide (LPS) and lipoteichoic acid (LTA), and activates cells through engagement of multiple surface receptors. In the extracellular compartment fully reduced HMGB1 (released by necrosis) acts as a chemokine, disulfide HMGB1 (actively secreted) as a cytokine, and sulfonyl HMGB1 (released from apoptotic cells) promotes immunological tolerance. Has proangiogenic activity. May be involved in platelet activation. Binds to phosphatidylserine and phosphatidylethanolamide. Bound to RAGE mediates signaling for neuronal outgrowth. May play a role in accumulation of expanded polyglutamine (polyQ) proteins (By similarity).</text>
</comment>
<comment type="function">
    <text evidence="1 2 3 4 8">Nuclear functions are attributed to fully reduced HGMB1. Associates with chromatin and binds DNA with a preference to non-canonical DNA structures such as single-stranded DNA, DNA-containing cruciforms or bent structures, supercoiled DNA and ZDNA. Can bent DNA and enhance DNA flexibility by looping thus providing a mechanism to promote activities on various gene promoters by enhancing transcription factor binding and/or bringing distant regulatory sequences into close proximity. May be involved in nucleotide excision repair (NER), mismatch repair (MMR) and base excision repair (BER) pathways, and double strand break repair such as non-homologous end joining (NHEJ). Involved in V(D)J recombination by acting as a cofactor of the RAG complex: acts by stimulating cleavage and RAG protein binding at the 23 bp spacer of conserved recombination signal sequences (RSS). In vitro can displace histone H1 from highly bent DNA. Can restructure the canonical nucleosome leading to relaxation of structural constraints for transcription factor-binding. Enhances binding of sterol regulatory element-binding proteins (SREBPs) such as SREBF1 to their cognate DNA sequences and increases their transcriptional activities. Facilitates binding of TP53 to DNA. May be involved in mitochondrial quality control and autophagy in a transcription-dependent fashion implicating HSPB1. Can modulate the activity of the telomerase complex and may be involved in telomere maintenance (By similarity). Represses porcine circovirus type 2 replication within the nucleus by binding to the Ori region of the viral genome (PubMed:32321806).</text>
</comment>
<comment type="function">
    <text evidence="1 3">In the cytoplasm proposed to dissociate the BECN1:BCL2 complex via competitive interaction with BECN1 leading to autophagy activation. Can protect BECN1 and ATG5 from calpain-mediated cleavage and thus proposed to control their proautophagic and proapoptotic functions and to regulate the extent and severity of inflammation-associated cellular injury. In myeloid cells has a protective role against endotoxemia and bacterial infection by promoting autophagy. Involved in endosomal translocation and activation of TLR9 in response to CpG-DNA in macrophages (By similarity).</text>
</comment>
<comment type="function">
    <text evidence="1 2 3 4 7">In the extracellular compartment (following either active secretion or passive release) involved in regulation of the inflammatory response. Fully reduced HGMB1 (which subsequently gets oxidized after release) in association with CXCL12 mediates the recruitment of inflammatory cells during the initial phase of tissue injury; the CXCL12:HMGB1 complex triggers CXCR4 homodimerization. Induces the migration of monocyte-derived immature dendritic cells and seems to regulate adhesive and migratory functions of neutrophils implicating AGER/RAGE and ITGAM. Can bind to various types of DNA and RNA including microbial unmethylated CpG-DNA to enhance the innate immune response to nucleic acids. Proposed to act in promiscuous DNA/RNA sensing which cooperates with subsequent discriminative sensing by specific pattern recognition receptors (By similarity). Promotes extracellular DNA-induced AIM2 inflammasome activation implicating AGER/RAGE. Disulfide HMGB1 binds to transmembrane receptors, such as AGER/RAGE, TLR2, TLR4 and probably TREM1, thus activating their signal transduction pathways (PubMed:14660645). Mediates the release of cytokines/chemokines such as TNF, IL-1, IL-6, IL-8, CCL2, CCL3, CCL4 and CXCL10. Promotes secretion of interferon-gamma by macrophage-stimulated natural killer (NK) cells in concert with other cytokines like IL-2 or IL-12. TLR4 is proposed to be the primary receptor promoting macrophage activation and signaling through TLR4 seems to implicate LY96/MD-2. In bacterial LPS- or LTA-mediated inflammatory responses binds to the endotoxins and transfers them to CD14 for signaling to the respective TLR4:LY96 and TLR2 complexes. Contributes to tumor proliferation by association with ACER/RAGE. Can bind to IL1-beta and signals through the IL1R1:IL1RAP receptor complex. Binding to class A CpG activates cytokine production in plasmacytoid dendritic cells implicating TLR9, MYD88 and AGER/RAGE and can activate autoreactive B cells. Via HMGB1-containing chromatin immune complexes may also promote B cell responses to endogenous TLR9 ligands through a B-cell receptor (BCR)-dependent and ACER/RAGE-independent mechanism. Inhibits phagocytosis of apoptotic cells by macrophages; the function is dependent on poly-ADP-ribosylation and involves binding to phosphatidylserine on the cell surface of apoptotic cells. In adaptive immunity may be involved in enhancing immunity through activation of effector T cells and suppression of regulatory T (TReg) cells. In contrast, without implicating effector or regulatory T-cells, required for tumor infiltration and activation of T-cells expressing the lymphotoxin LTA:LTB heterotrimer thus promoting tumor malignant progression. Also reported to limit proliferation of T-cells. Released HMGB1:nucleosome complexes formed during apoptosis can signal through TLR2 to induce cytokine production. Involved in induction of immunological tolerance by apoptotic cells; its pro-inflammatory activities when released by apoptotic cells are neutralized by reactive oxygen species (ROS)-dependent oxidation specifically on Cys-106. During macrophage activation by activated lymphocyte-derived self apoptotic DNA (ALD-DNA) promotes recruitment of ALD-DNA to endosomes (By similarity).</text>
</comment>
<comment type="subunit">
    <text evidence="1 3 4">Interacts (fully reduced HMGB1) with CXCL12; probably in a 1:2 ratio involving two molecules of CXCL12, each interacting with one HMG box of HMGB1; inhibited by glycyrrhizin. Associates with the TLR4:LY96 receptor complex. Component of the RAG complex composed of core components RAG1 and RAG2, and associated component HMGB1 or HMGB2. Interacts (in cytoplasm upon starvation) with BECN1; inhibits the interaction of BECN1 and BCL2 leading to promotion of autophagy. Interacts with KPNA1; involved in nuclear import. Interacts with SREBF1, TLR2, TLR4, TLR9, PTPRZ1, APEX1, FEN1, POLB, TERT. Interacts with IL1B, AGER, MSH2, XPA, XPC, HNF1A, TP53. Interacts with CD24; the probable CD24:SIGLEC10 complex is proposed to inhibit HGMB1-mediated tissue damage immune response. Interacts with THBD; prevents HGMB1 interaction with ACER/RAGE and inhibits HGMB1 pro-inflammatory activity. Interacts with HAVCR2; impairs HMGB1 binding to B-DNA and likely HMGB1-mediated innate immune response. Interacts with XPO1; mediating nuclear export. Interacts with receptor RAGE/AGER (By similarity).</text>
</comment>
<comment type="subcellular location">
    <subcellularLocation>
        <location evidence="8 9">Nucleus</location>
    </subcellularLocation>
    <subcellularLocation>
        <location evidence="2 4">Chromosome</location>
    </subcellularLocation>
    <subcellularLocation>
        <location evidence="9">Cytoplasm</location>
    </subcellularLocation>
    <subcellularLocation>
        <location evidence="8 9">Secreted</location>
    </subcellularLocation>
    <subcellularLocation>
        <location evidence="1 3 4">Cell membrane</location>
        <topology evidence="1 3 4">Peripheral membrane protein</topology>
        <orientation evidence="1 3 4">Extracellular side</orientation>
    </subcellularLocation>
    <subcellularLocation>
        <location evidence="3">Endosome</location>
    </subcellularLocation>
    <subcellularLocation>
        <location evidence="3">Endoplasmic reticulum-Golgi intermediate compartment</location>
    </subcellularLocation>
    <text evidence="1 3">In basal state predominantly nuclear. Shuttles between the cytoplasm and the nucleus. Translocates from the nucleus to the cytoplasm upon autophagy stimulation. Release from macrophages in the extracellular milieu requires the activation of NLRC4 or NLRP3 inflammasomes (By similarity). Passively released to the extracellular milieu from necrotic cells by diffusion, involving the fully reduced HGMB1 which subsequently gets oxidized. Also released from apoptotic cells. Active secretion from a variety of immune and non-immune cells such as macrophages, monocytes, neutrophils, dendritic cells, natural killer cells and plasma cells in response to various stimuli such as LPS and cytokines involves a nonconventional secretory process via secretory lysosomes. Found on the surface of activated platelets.</text>
</comment>
<comment type="domain">
    <text evidence="1">HMG box 2 mediates pro-inflammatory cytokine-stimulating activity and binding to TLR4. However, not involved in mediating immunogenic activity in the context of apoptosis-induced immune tolerance.</text>
</comment>
<comment type="domain">
    <text evidence="1 4">The acidic C-terminal domain forms a flexible structure which can reversibly interact intramolecularily with the HMG boxes and modulate binding to DNA and other proteins.</text>
</comment>
<comment type="PTM">
    <text evidence="1 9">Phosphorylated at serine residues. Phosphorylation in both NLS regions is required for cytoplasmic translocation followed by secretion (By similarity). Phosphorylation at Thr-51 within the NLS is crucial for secretion induced by porcine reproductive and respiratory syndrome virus (PRRSV) (PubMed:35632744).</text>
</comment>
<comment type="PTM">
    <text evidence="1 2 4">Acetylated on multiple sites upon stimulation with LPS (By similarity). Acetylation on lysine residues in the nuclear localization signals (NLS 1 and NLS 2) leads to cytoplasmic localization and subsequent secretion. Acetylation on Lys-3 results in preferential binding to DNA ends and impairs DNA bending activity.</text>
</comment>
<comment type="PTM">
    <text evidence="1">Reduction/oxidation of cysteine residues Cys-23, Cys-45 and Cys-106 and a possible intramolecular disulfide bond involving Cys-23 and Cys-45 give rise to different redox forms with specific functional activities in various cellular compartments: 1- fully reduced HMGB1 (HMGB1C23hC45hC106h), 2- disulfide HMGB1 (HMGB1C23-C45C106h) and 3- sulfonyl HMGB1 (HMGB1C23soC45soC106so).</text>
</comment>
<comment type="PTM">
    <text evidence="3">Poly-ADP-ribosylated by PARP1 when secreted following stimulation with LPS.</text>
</comment>
<comment type="PTM">
    <text evidence="1 2">In vitro cleavage by CASP1 is liberating a HMG box 1-containing peptide which may mediate immunogenic activity; the peptide antagonizes apoptosis-induced immune tolerance. Can be proteolytically cleaved by a thrombin:thrombomodulin complex; reduces binding to heparin and pro-inflammatory activities (By similarity).</text>
</comment>
<comment type="PTM">
    <text evidence="1">Forms covalent cross-links mediated by transglutaminase TGM2, between a glutamine and the epsilon-amino group of a lysine residue, forming homopolymers and heteropolymers.</text>
</comment>
<comment type="similarity">
    <text evidence="10">Belongs to the HMGB family.</text>
</comment>
<gene>
    <name type="primary">HMGB1</name>
    <name type="synonym">HMG1</name>
</gene>
<evidence type="ECO:0000250" key="1">
    <source>
        <dbReference type="UniProtKB" id="P09429"/>
    </source>
</evidence>
<evidence type="ECO:0000250" key="2">
    <source>
        <dbReference type="UniProtKB" id="P10103"/>
    </source>
</evidence>
<evidence type="ECO:0000250" key="3">
    <source>
        <dbReference type="UniProtKB" id="P63158"/>
    </source>
</evidence>
<evidence type="ECO:0000250" key="4">
    <source>
        <dbReference type="UniProtKB" id="P63159"/>
    </source>
</evidence>
<evidence type="ECO:0000255" key="5">
    <source>
        <dbReference type="PROSITE-ProRule" id="PRU00267"/>
    </source>
</evidence>
<evidence type="ECO:0000256" key="6">
    <source>
        <dbReference type="SAM" id="MobiDB-lite"/>
    </source>
</evidence>
<evidence type="ECO:0000269" key="7">
    <source>
    </source>
</evidence>
<evidence type="ECO:0000269" key="8">
    <source>
    </source>
</evidence>
<evidence type="ECO:0000269" key="9">
    <source>
    </source>
</evidence>
<evidence type="ECO:0000305" key="10"/>
<organism>
    <name type="scientific">Sus scrofa</name>
    <name type="common">Pig</name>
    <dbReference type="NCBI Taxonomy" id="9823"/>
    <lineage>
        <taxon>Eukaryota</taxon>
        <taxon>Metazoa</taxon>
        <taxon>Chordata</taxon>
        <taxon>Craniata</taxon>
        <taxon>Vertebrata</taxon>
        <taxon>Euteleostomi</taxon>
        <taxon>Mammalia</taxon>
        <taxon>Eutheria</taxon>
        <taxon>Laurasiatheria</taxon>
        <taxon>Artiodactyla</taxon>
        <taxon>Suina</taxon>
        <taxon>Suidae</taxon>
        <taxon>Sus</taxon>
    </lineage>
</organism>
<feature type="chain" id="PRO_0000048529" description="High mobility group protein B1">
    <location>
        <begin position="1"/>
        <end position="215"/>
    </location>
</feature>
<feature type="DNA-binding region" description="HMG box 1" evidence="5">
    <location>
        <begin position="9"/>
        <end position="79"/>
    </location>
</feature>
<feature type="DNA-binding region" description="HMG box 2" evidence="5">
    <location>
        <begin position="95"/>
        <end position="163"/>
    </location>
</feature>
<feature type="region of interest" description="Sufficient for interaction with HAVCR2" evidence="3">
    <location>
        <begin position="1"/>
        <end position="97"/>
    </location>
</feature>
<feature type="region of interest" description="LPS binding (delipidated)" evidence="1">
    <location>
        <begin position="3"/>
        <end position="15"/>
    </location>
</feature>
<feature type="region of interest" description="Disordered" evidence="6">
    <location>
        <begin position="76"/>
        <end position="95"/>
    </location>
</feature>
<feature type="region of interest" description="LPS binding (Lipid A)" evidence="1">
    <location>
        <begin position="80"/>
        <end position="96"/>
    </location>
</feature>
<feature type="region of interest" description="Cytokine-stimulating activity" evidence="1">
    <location>
        <begin position="89"/>
        <end position="108"/>
    </location>
</feature>
<feature type="region of interest" description="Binding to AGER/RAGE" evidence="4">
    <location>
        <begin position="150"/>
        <end position="183"/>
    </location>
</feature>
<feature type="region of interest" description="Disordered" evidence="6">
    <location>
        <begin position="162"/>
        <end position="215"/>
    </location>
</feature>
<feature type="short sequence motif" description="Nuclear localization signal (NLS) 1" evidence="4">
    <location>
        <begin position="27"/>
        <end position="43"/>
    </location>
</feature>
<feature type="short sequence motif" description="Nuclear localization signal (NLS) 2" evidence="4">
    <location>
        <begin position="178"/>
        <end position="184"/>
    </location>
</feature>
<feature type="compositionally biased region" description="Basic and acidic residues" evidence="6">
    <location>
        <begin position="83"/>
        <end position="94"/>
    </location>
</feature>
<feature type="compositionally biased region" description="Basic and acidic residues" evidence="6">
    <location>
        <begin position="162"/>
        <end position="179"/>
    </location>
</feature>
<feature type="compositionally biased region" description="Acidic residues" evidence="6">
    <location>
        <begin position="187"/>
        <end position="215"/>
    </location>
</feature>
<feature type="binding site" evidence="2">
    <location>
        <begin position="1"/>
        <end position="10"/>
    </location>
    <ligand>
        <name>heparin</name>
        <dbReference type="ChEBI" id="CHEBI:28304"/>
    </ligand>
</feature>
<feature type="site" description="Cleavage; by thrombin:thrombomodulin" evidence="2">
    <location>
        <begin position="10"/>
        <end position="11"/>
    </location>
</feature>
<feature type="site" description="Cleavage; by CASP1" evidence="1">
    <location>
        <begin position="67"/>
        <end position="68"/>
    </location>
</feature>
<feature type="modified residue" description="N6-acetyllysine" evidence="2">
    <location>
        <position position="3"/>
    </location>
</feature>
<feature type="modified residue" description="N6-acetyllysine" evidence="2">
    <location>
        <position position="7"/>
    </location>
</feature>
<feature type="modified residue" description="N6-acetyllysine" evidence="2">
    <location>
        <position position="8"/>
    </location>
</feature>
<feature type="modified residue" description="N6-acetyllysine" evidence="2">
    <location>
        <position position="12"/>
    </location>
</feature>
<feature type="modified residue" description="Cysteine sulfonic acid (-SO3H); alternate" evidence="4">
    <location>
        <position position="23"/>
    </location>
</feature>
<feature type="modified residue" description="N6-acetyllysine" evidence="2">
    <location>
        <position position="28"/>
    </location>
</feature>
<feature type="modified residue" description="N6-acetyllysine" evidence="2">
    <location>
        <position position="29"/>
    </location>
</feature>
<feature type="modified residue" description="N6-acetyllysine" evidence="2">
    <location>
        <position position="30"/>
    </location>
</feature>
<feature type="modified residue" description="Phosphoserine" evidence="1">
    <location>
        <position position="35"/>
    </location>
</feature>
<feature type="modified residue" description="N6-acetyllysine" evidence="3">
    <location>
        <position position="43"/>
    </location>
</feature>
<feature type="modified residue" description="Cysteine sulfonic acid (-SO3H); alternate" evidence="4">
    <location>
        <position position="45"/>
    </location>
</feature>
<feature type="modified residue" description="Phosphothreonine" evidence="9">
    <location>
        <position position="51"/>
    </location>
</feature>
<feature type="modified residue" description="N6-acetyllysine" evidence="3">
    <location>
        <position position="90"/>
    </location>
</feature>
<feature type="modified residue" description="Phosphoserine" evidence="1">
    <location>
        <position position="100"/>
    </location>
</feature>
<feature type="modified residue" description="Cysteine sulfonic acid (-SO3H)" evidence="4">
    <location>
        <position position="106"/>
    </location>
</feature>
<feature type="modified residue" description="N6-acetyllysine" evidence="2">
    <location>
        <position position="127"/>
    </location>
</feature>
<feature type="modified residue" description="N6-acetyllysine" evidence="2">
    <location>
        <position position="128"/>
    </location>
</feature>
<feature type="modified residue" description="N6-acetyllysine" evidence="3">
    <location>
        <position position="141"/>
    </location>
</feature>
<feature type="modified residue" description="N6-acetyllysine" evidence="2">
    <location>
        <position position="172"/>
    </location>
</feature>
<feature type="modified residue" description="N6-acetyllysine" evidence="2">
    <location>
        <position position="173"/>
    </location>
</feature>
<feature type="modified residue" description="N6-acetyllysine" evidence="2">
    <location>
        <position position="177"/>
    </location>
</feature>
<feature type="modified residue" description="N6-acetyllysine" evidence="2">
    <location>
        <position position="180"/>
    </location>
</feature>
<feature type="modified residue" description="ADP-ribosylserine" evidence="1">
    <location>
        <position position="181"/>
    </location>
</feature>
<feature type="modified residue" description="N6-acetyllysine" evidence="2">
    <location>
        <position position="182"/>
    </location>
</feature>
<feature type="modified residue" description="N6-acetyllysine" evidence="2">
    <location>
        <position position="183"/>
    </location>
</feature>
<feature type="modified residue" description="N6-acetyllysine" evidence="2">
    <location>
        <position position="184"/>
    </location>
</feature>
<feature type="modified residue" description="N6-acetyllysine" evidence="2">
    <location>
        <position position="185"/>
    </location>
</feature>
<feature type="disulfide bond" description="In disulfide HMGB1; alternate" evidence="4">
    <location>
        <begin position="23"/>
        <end position="45"/>
    </location>
</feature>
<feature type="cross-link" description="Isoglutamyl lysine isopeptide (Lys-Gln) (interchain with Q-?)" evidence="1">
    <location>
        <position position="28"/>
    </location>
</feature>
<feature type="cross-link" description="Isoglutamyl lysine isopeptide (Lys-Gln) (interchain with Q-?)" evidence="1">
    <location>
        <position position="43"/>
    </location>
</feature>
<feature type="cross-link" description="Isoglutamyl lysine isopeptide (Lys-Gln) (interchain with Q-?)" evidence="1">
    <location>
        <position position="44"/>
    </location>
</feature>
<feature type="cross-link" description="Isoglutamyl lysine isopeptide (Lys-Gln) (interchain with Q-?)" evidence="1">
    <location>
        <position position="68"/>
    </location>
</feature>
<feature type="cross-link" description="Isoglutamyl lysine isopeptide (Lys-Gln) (interchain with Q-?)" evidence="1">
    <location>
        <position position="180"/>
    </location>
</feature>
<feature type="cross-link" description="Isoglutamyl lysine isopeptide (Lys-Gln) (interchain with Q-?)" evidence="1">
    <location>
        <position position="182"/>
    </location>
</feature>
<feature type="cross-link" description="Isoglutamyl lysine isopeptide (Lys-Gln) (interchain with Q-?)" evidence="1">
    <location>
        <position position="183"/>
    </location>
</feature>
<feature type="cross-link" description="Isoglutamyl lysine isopeptide (Lys-Gln) (interchain with Q-?)" evidence="1">
    <location>
        <position position="184"/>
    </location>
</feature>
<feature type="mutagenesis site" description="Loss of phosphorylation and ssociated secretion." evidence="9">
    <original>T</original>
    <variation>A</variation>
    <location>
        <position position="51"/>
    </location>
</feature>
<keyword id="KW-0007">Acetylation</keyword>
<keyword id="KW-1064">Adaptive immunity</keyword>
<keyword id="KW-0013">ADP-ribosylation</keyword>
<keyword id="KW-0072">Autophagy</keyword>
<keyword id="KW-1003">Cell membrane</keyword>
<keyword id="KW-0145">Chemotaxis</keyword>
<keyword id="KW-0158">Chromosome</keyword>
<keyword id="KW-0963">Cytoplasm</keyword>
<keyword id="KW-1015">Disulfide bond</keyword>
<keyword id="KW-0227">DNA damage</keyword>
<keyword id="KW-0233">DNA recombination</keyword>
<keyword id="KW-0234">DNA repair</keyword>
<keyword id="KW-0238">DNA-binding</keyword>
<keyword id="KW-0967">Endosome</keyword>
<keyword id="KW-0391">Immunity</keyword>
<keyword id="KW-0395">Inflammatory response</keyword>
<keyword id="KW-0399">Innate immunity</keyword>
<keyword id="KW-1017">Isopeptide bond</keyword>
<keyword id="KW-0472">Membrane</keyword>
<keyword id="KW-0539">Nucleus</keyword>
<keyword id="KW-0558">Oxidation</keyword>
<keyword id="KW-0597">Phosphoprotein</keyword>
<keyword id="KW-1185">Reference proteome</keyword>
<keyword id="KW-0677">Repeat</keyword>
<keyword id="KW-0964">Secreted</keyword>
<accession>P12682</accession>